<evidence type="ECO:0000250" key="1"/>
<evidence type="ECO:0000255" key="2">
    <source>
        <dbReference type="PROSITE-ProRule" id="PRU00115"/>
    </source>
</evidence>
<evidence type="ECO:0000305" key="3"/>
<proteinExistence type="evidence at transcript level"/>
<organism>
    <name type="scientific">Bos taurus</name>
    <name type="common">Bovine</name>
    <dbReference type="NCBI Taxonomy" id="9913"/>
    <lineage>
        <taxon>Eukaryota</taxon>
        <taxon>Metazoa</taxon>
        <taxon>Chordata</taxon>
        <taxon>Craniata</taxon>
        <taxon>Vertebrata</taxon>
        <taxon>Euteleostomi</taxon>
        <taxon>Mammalia</taxon>
        <taxon>Eutheria</taxon>
        <taxon>Laurasiatheria</taxon>
        <taxon>Artiodactyla</taxon>
        <taxon>Ruminantia</taxon>
        <taxon>Pecora</taxon>
        <taxon>Bovidae</taxon>
        <taxon>Bovinae</taxon>
        <taxon>Bos</taxon>
    </lineage>
</organism>
<keyword id="KW-0963">Cytoplasm</keyword>
<keyword id="KW-0539">Nucleus</keyword>
<keyword id="KW-0653">Protein transport</keyword>
<keyword id="KW-1185">Reference proteome</keyword>
<keyword id="KW-0677">Repeat</keyword>
<keyword id="KW-0813">Transport</keyword>
<name>IPO13_BOVIN</name>
<protein>
    <recommendedName>
        <fullName>Importin-13</fullName>
        <shortName>Imp13</shortName>
    </recommendedName>
</protein>
<gene>
    <name type="primary">IPO13</name>
</gene>
<dbReference type="EMBL" id="BC134514">
    <property type="protein sequence ID" value="AAI34515.1"/>
    <property type="molecule type" value="mRNA"/>
</dbReference>
<dbReference type="RefSeq" id="NP_001098860.1">
    <property type="nucleotide sequence ID" value="NM_001105390.1"/>
</dbReference>
<dbReference type="SMR" id="A7YWD2"/>
<dbReference type="FunCoup" id="A7YWD2">
    <property type="interactions" value="2377"/>
</dbReference>
<dbReference type="STRING" id="9913.ENSBTAP00000025142"/>
<dbReference type="PaxDb" id="9913-ENSBTAP00000025142"/>
<dbReference type="GeneID" id="523399"/>
<dbReference type="KEGG" id="bta:523399"/>
<dbReference type="CTD" id="9670"/>
<dbReference type="VEuPathDB" id="HostDB:ENSBTAG00000018887"/>
<dbReference type="eggNOG" id="KOG2022">
    <property type="taxonomic scope" value="Eukaryota"/>
</dbReference>
<dbReference type="HOGENOM" id="CLU_005996_3_0_1"/>
<dbReference type="InParanoid" id="A7YWD2"/>
<dbReference type="OMA" id="KYPAEMA"/>
<dbReference type="OrthoDB" id="2016913at2759"/>
<dbReference type="TreeFam" id="TF314539"/>
<dbReference type="Proteomes" id="UP000009136">
    <property type="component" value="Chromosome 3"/>
</dbReference>
<dbReference type="Bgee" id="ENSBTAG00000018887">
    <property type="expression patterns" value="Expressed in choroid plexus and 104 other cell types or tissues"/>
</dbReference>
<dbReference type="GO" id="GO:0005737">
    <property type="term" value="C:cytoplasm"/>
    <property type="evidence" value="ECO:0000318"/>
    <property type="project" value="GO_Central"/>
</dbReference>
<dbReference type="GO" id="GO:0005634">
    <property type="term" value="C:nucleus"/>
    <property type="evidence" value="ECO:0007669"/>
    <property type="project" value="UniProtKB-SubCell"/>
</dbReference>
<dbReference type="GO" id="GO:0031267">
    <property type="term" value="F:small GTPase binding"/>
    <property type="evidence" value="ECO:0007669"/>
    <property type="project" value="InterPro"/>
</dbReference>
<dbReference type="GO" id="GO:0006606">
    <property type="term" value="P:protein import into nucleus"/>
    <property type="evidence" value="ECO:0000318"/>
    <property type="project" value="GO_Central"/>
</dbReference>
<dbReference type="FunFam" id="1.25.10.10:FF:000107">
    <property type="entry name" value="Importin-13"/>
    <property type="match status" value="1"/>
</dbReference>
<dbReference type="Gene3D" id="1.25.10.10">
    <property type="entry name" value="Leucine-rich Repeat Variant"/>
    <property type="match status" value="1"/>
</dbReference>
<dbReference type="InterPro" id="IPR011989">
    <property type="entry name" value="ARM-like"/>
</dbReference>
<dbReference type="InterPro" id="IPR016024">
    <property type="entry name" value="ARM-type_fold"/>
</dbReference>
<dbReference type="InterPro" id="IPR013598">
    <property type="entry name" value="Exportin-1/Importin-b-like"/>
</dbReference>
<dbReference type="InterPro" id="IPR001494">
    <property type="entry name" value="Importin-beta_N"/>
</dbReference>
<dbReference type="InterPro" id="IPR051345">
    <property type="entry name" value="Importin_beta-like_NTR"/>
</dbReference>
<dbReference type="InterPro" id="IPR040709">
    <property type="entry name" value="Importin_rep_1"/>
</dbReference>
<dbReference type="InterPro" id="IPR040944">
    <property type="entry name" value="Importin_rep_2"/>
</dbReference>
<dbReference type="InterPro" id="IPR040520">
    <property type="entry name" value="Importin_rep_3"/>
</dbReference>
<dbReference type="PANTHER" id="PTHR12363:SF33">
    <property type="entry name" value="IMPORTIN-13"/>
    <property type="match status" value="1"/>
</dbReference>
<dbReference type="PANTHER" id="PTHR12363">
    <property type="entry name" value="TRANSPORTIN 3 AND IMPORTIN 13"/>
    <property type="match status" value="1"/>
</dbReference>
<dbReference type="Pfam" id="PF03810">
    <property type="entry name" value="IBN_N"/>
    <property type="match status" value="1"/>
</dbReference>
<dbReference type="Pfam" id="PF18773">
    <property type="entry name" value="Importin_rep"/>
    <property type="match status" value="1"/>
</dbReference>
<dbReference type="Pfam" id="PF18786">
    <property type="entry name" value="Importin_rep_2"/>
    <property type="match status" value="2"/>
</dbReference>
<dbReference type="Pfam" id="PF18806">
    <property type="entry name" value="Importin_rep_3"/>
    <property type="match status" value="1"/>
</dbReference>
<dbReference type="Pfam" id="PF24138">
    <property type="entry name" value="TPR_TNPO3_IPO13_2nd"/>
    <property type="match status" value="1"/>
</dbReference>
<dbReference type="Pfam" id="PF24140">
    <property type="entry name" value="TPR_TNPO3_IPO13_3rd"/>
    <property type="match status" value="1"/>
</dbReference>
<dbReference type="Pfam" id="PF24139">
    <property type="entry name" value="TPR_TNPO3_IPO13_4th"/>
    <property type="match status" value="1"/>
</dbReference>
<dbReference type="Pfam" id="PF08389">
    <property type="entry name" value="Xpo1"/>
    <property type="match status" value="1"/>
</dbReference>
<dbReference type="SMART" id="SM00913">
    <property type="entry name" value="IBN_N"/>
    <property type="match status" value="1"/>
</dbReference>
<dbReference type="SUPFAM" id="SSF48371">
    <property type="entry name" value="ARM repeat"/>
    <property type="match status" value="1"/>
</dbReference>
<dbReference type="PROSITE" id="PS50166">
    <property type="entry name" value="IMPORTIN_B_NT"/>
    <property type="match status" value="1"/>
</dbReference>
<comment type="function">
    <text evidence="1">Functions in nuclear protein import as nuclear transport receptor. Serves as receptor for nuclear localization signals (NLS) in cargo substrates. Is thought to mediate docking of the importin/substrate complex to the nuclear pore complex (NPC) through binding to nucleoporin and the complex is subsequently translocated through the pore by an energy requiring, Ran-dependent mechanism. At the nucleoplasmic side of the NPC, Ran binds to the importin, the importin/substrate complex dissociates and importin is re-exported from the nucleus to the cytoplasm where GTP hydrolysis releases Ran. The directionality of nuclear import is thought to be conferred by an asymmetric distribution of the GTP- and GDP-bound forms of Ran between the cytoplasm and nucleus (By similarity). Mediates the nuclear import of UBC9, the RBM8A/MAGOH complex, PAX6 and probably other members of the paired homeobox family. Also mediates nuclear export of eIF-1A, and the cytoplasmic release of eIF-1A is triggered by the loading of import substrates onto IPO13 (By similarity).</text>
</comment>
<comment type="subunit">
    <text evidence="1">Interacts with UBC9, RAN, RBM8A, eIF-1A and PAX6.</text>
</comment>
<comment type="subcellular location">
    <subcellularLocation>
        <location evidence="1">Cytoplasm</location>
    </subcellularLocation>
    <subcellularLocation>
        <location evidence="1">Nucleus</location>
    </subcellularLocation>
</comment>
<comment type="similarity">
    <text evidence="3">Belongs to the importin beta family.</text>
</comment>
<reference key="1">
    <citation type="submission" date="2007-03" db="EMBL/GenBank/DDBJ databases">
        <authorList>
            <consortium name="NIH - Mammalian Gene Collection (MGC) project"/>
        </authorList>
    </citation>
    <scope>NUCLEOTIDE SEQUENCE [LARGE SCALE MRNA]</scope>
    <source>
        <strain>Hereford</strain>
        <tissue>Ascending colon</tissue>
    </source>
</reference>
<sequence length="963" mass="108139">MERREEQPGAAGAGAAPALDFTVENVEKALHQLYYDPNIENKNLAQKWLMQAQASPQAWHFSWQLLQPDKVPEIQYFGASALHIKISRYWSDIPTDQYESLKAQLFTQITRFASGSKIVLTRLCVALASLALSMMPDAWPCAVADMVRLFQAEDSPVDSQGRCLALLELLTVLPEEFQTSRLPQYRKSLVRTSLAVECGAVFPLLEQLLQQPSSPSCVRQKVLKCFSSWVQLEVPLQDCEALIQAAFAALQDSELFDSSVEAIVNAISQPDAQRYVNTLLKLIPLVLGLQDQLRQAVQNGDMETSHGICRIAVALGENHSRALLDQVEHWQSFLALVNMIMFCTGIPGHFPVNETTSSLTLTFWYTLQDDILSFEAEKQAVYQQVYRPVYFQLVDVLLHKAQFPSDEEYGFWSSDEKEQFRIYRVDISDTLMYVYEMLGAELLSNLYDKLGRLLTSSEEPYSWQHTEALLYGFQSIAETIDVNYSDVVPGLIGLIPRISISNVQLADTVMFTIGALSEWLADHPVMINSVLPLVLHALGNPELSISSVSTLKKICRECKYDLPPYAANIVAVSQDVLMKQIHKTSQCMWLMQALGFLLSALQVEEILKNLHSLISPYIQQLEKLAEEIPNPSNKLAIVHILGLLSNLFTTLDVSHHEDDHEGSELRKLPVPQGPNPVVVVLQQVFQLIQKVLSKWLNDAQVVEAVCAIFEKSVKTLLDDFAPMVPQLCEMLGRMYSTIPQASALDLTRQLVHIFAHEPAHFPPIEALFLLVTSVTLTLFQQGPRDHPDIVDSFMQLLAQALKRKPDLFLCERLDVKAVFQCAVLALKFPEAPTVKASCGFFTELLPRCGEVEPVGKVVQEDGRMLLIAVLEAIGGQASRSLMDCFADILFALNKHCFSLLSVWIKEALQAPGFPSARLSPEQKDTFSQQILRERVNKRRVKEMVKEFTLLCRGLHGTDYTADY</sequence>
<feature type="chain" id="PRO_0000357046" description="Importin-13">
    <location>
        <begin position="1"/>
        <end position="963"/>
    </location>
</feature>
<feature type="repeat" description="HEAT 1">
    <location>
        <begin position="24"/>
        <end position="54"/>
    </location>
</feature>
<feature type="domain" description="Importin N-terminal" evidence="2">
    <location>
        <begin position="45"/>
        <end position="111"/>
    </location>
</feature>
<feature type="repeat" description="HEAT 2">
    <location>
        <begin position="56"/>
        <end position="88"/>
    </location>
</feature>
<feature type="repeat" description="HEAT 3">
    <location>
        <begin position="95"/>
        <end position="135"/>
    </location>
</feature>
<feature type="repeat" description="HEAT 4">
    <location>
        <begin position="142"/>
        <end position="179"/>
    </location>
</feature>
<feature type="repeat" description="HEAT 5">
    <location>
        <begin position="194"/>
        <end position="231"/>
    </location>
</feature>
<feature type="repeat" description="HEAT 6">
    <location>
        <begin position="236"/>
        <end position="268"/>
    </location>
</feature>
<feature type="repeat" description="HEAT 7">
    <location>
        <begin position="276"/>
        <end position="325"/>
    </location>
</feature>
<feature type="repeat" description="HEAT 8">
    <location>
        <begin position="330"/>
        <end position="372"/>
    </location>
</feature>
<feature type="repeat" description="HEAT 9">
    <location>
        <begin position="375"/>
        <end position="438"/>
    </location>
</feature>
<feature type="repeat" description="HEAT 10">
    <location>
        <begin position="440"/>
        <end position="476"/>
    </location>
</feature>
<feature type="repeat" description="HEAT 11">
    <location>
        <begin position="487"/>
        <end position="522"/>
    </location>
</feature>
<feature type="repeat" description="HEAT 12">
    <location>
        <begin position="524"/>
        <end position="558"/>
    </location>
</feature>
<feature type="repeat" description="HEAT 13">
    <location>
        <begin position="562"/>
        <end position="600"/>
    </location>
</feature>
<feature type="repeat" description="HEAT 14">
    <location>
        <begin position="603"/>
        <end position="648"/>
    </location>
</feature>
<feature type="repeat" description="HEAT 15">
    <location>
        <begin position="676"/>
        <end position="716"/>
    </location>
</feature>
<feature type="repeat" description="HEAT 16">
    <location>
        <begin position="720"/>
        <end position="754"/>
    </location>
</feature>
<feature type="repeat" description="HEAT 17">
    <location>
        <begin position="761"/>
        <end position="803"/>
    </location>
</feature>
<feature type="repeat" description="HEAT 18">
    <location>
        <begin position="815"/>
        <end position="845"/>
    </location>
</feature>
<feature type="repeat" description="HEAT 19">
    <location>
        <begin position="860"/>
        <end position="893"/>
    </location>
</feature>
<feature type="repeat" description="HEAT 20">
    <location>
        <begin position="897"/>
        <end position="931"/>
    </location>
</feature>
<accession>A7YWD2</accession>